<sequence>MAARLLWAVRRRMQPLAAHAASEGRGWLHPFSTATQRTAGEDCNSEDPPDELGPSLAERALKLKAVKLEKEVQDLTVRYQRAVADSENIRRRTQRCVEDAKIFGIQSFCKDLVEVADILEKTTECISEETEPADQKLTLEKIFRGLSLLEAKLKSVFAKHGLEKMTPIGDKYDPHEHELICHVPAGVGVQPGTVAFVRQDGYKLHGRTIRLAQVEVAVESQRRL</sequence>
<comment type="function">
    <text evidence="1">Essential component of the PAM complex, a complex required for the translocation of transit peptide-containing proteins from the inner membrane into the mitochondrial matrix in an ATP-dependent manner. Seems to control the nucleotide-dependent binding of mitochondrial HSP70 to substrate proteins. Stimulates ATPase activity of mt-HSP70. May also serve to modulate the interconversion of oligomeric (inactive) and monomeric (active) forms of mt-HSP70 (By similarity).</text>
</comment>
<comment type="subunit">
    <text evidence="1">Probable component of the PAM complex at least composed of a mitochondrial HSP70 protein, GRPEL1 or GRPEL2, TIMM44, TIMM16/PAM16 and TIMM14/DNAJC19.</text>
</comment>
<comment type="subcellular location">
    <subcellularLocation>
        <location evidence="1">Mitochondrion matrix</location>
    </subcellularLocation>
</comment>
<comment type="similarity">
    <text evidence="3">Belongs to the GrpE family.</text>
</comment>
<gene>
    <name type="primary">GRPEL2</name>
</gene>
<evidence type="ECO:0000250" key="1"/>
<evidence type="ECO:0000250" key="2">
    <source>
        <dbReference type="UniProtKB" id="Q8TAA5"/>
    </source>
</evidence>
<evidence type="ECO:0000305" key="3"/>
<protein>
    <recommendedName>
        <fullName>GrpE protein homolog 2, mitochondrial</fullName>
    </recommendedName>
    <alternativeName>
        <fullName>Mt-GrpE#2</fullName>
    </alternativeName>
</protein>
<proteinExistence type="evidence at transcript level"/>
<dbReference type="EMBL" id="BC119818">
    <property type="protein sequence ID" value="AAI19819.1"/>
    <property type="molecule type" value="mRNA"/>
</dbReference>
<dbReference type="RefSeq" id="NP_001069142.1">
    <property type="nucleotide sequence ID" value="NM_001075674.1"/>
</dbReference>
<dbReference type="SMR" id="Q0P5N5"/>
<dbReference type="FunCoup" id="Q0P5N5">
    <property type="interactions" value="1190"/>
</dbReference>
<dbReference type="STRING" id="9913.ENSBTAP00000026575"/>
<dbReference type="PaxDb" id="9913-ENSBTAP00000026575"/>
<dbReference type="Ensembl" id="ENSBTAT00000026575.6">
    <property type="protein sequence ID" value="ENSBTAP00000026575.5"/>
    <property type="gene ID" value="ENSBTAG00000019950.7"/>
</dbReference>
<dbReference type="GeneID" id="514599"/>
<dbReference type="KEGG" id="bta:514599"/>
<dbReference type="CTD" id="134266"/>
<dbReference type="VEuPathDB" id="HostDB:ENSBTAG00000019950"/>
<dbReference type="eggNOG" id="KOG3003">
    <property type="taxonomic scope" value="Eukaryota"/>
</dbReference>
<dbReference type="GeneTree" id="ENSGT00390000005589"/>
<dbReference type="HOGENOM" id="CLU_057217_0_1_1"/>
<dbReference type="InParanoid" id="Q0P5N5"/>
<dbReference type="OMA" id="KQAHNDA"/>
<dbReference type="OrthoDB" id="201635at2759"/>
<dbReference type="TreeFam" id="TF105284"/>
<dbReference type="Proteomes" id="UP000009136">
    <property type="component" value="Chromosome 7"/>
</dbReference>
<dbReference type="Bgee" id="ENSBTAG00000019950">
    <property type="expression patterns" value="Expressed in oocyte and 104 other cell types or tissues"/>
</dbReference>
<dbReference type="GO" id="GO:0001405">
    <property type="term" value="C:PAM complex, Tim23 associated import motor"/>
    <property type="evidence" value="ECO:0000318"/>
    <property type="project" value="GO_Central"/>
</dbReference>
<dbReference type="GO" id="GO:0000774">
    <property type="term" value="F:adenyl-nucleotide exchange factor activity"/>
    <property type="evidence" value="ECO:0000318"/>
    <property type="project" value="GO_Central"/>
</dbReference>
<dbReference type="GO" id="GO:0042803">
    <property type="term" value="F:protein homodimerization activity"/>
    <property type="evidence" value="ECO:0007669"/>
    <property type="project" value="InterPro"/>
</dbReference>
<dbReference type="GO" id="GO:0051087">
    <property type="term" value="F:protein-folding chaperone binding"/>
    <property type="evidence" value="ECO:0007669"/>
    <property type="project" value="InterPro"/>
</dbReference>
<dbReference type="GO" id="GO:0051082">
    <property type="term" value="F:unfolded protein binding"/>
    <property type="evidence" value="ECO:0000318"/>
    <property type="project" value="GO_Central"/>
</dbReference>
<dbReference type="GO" id="GO:0006457">
    <property type="term" value="P:protein folding"/>
    <property type="evidence" value="ECO:0007669"/>
    <property type="project" value="InterPro"/>
</dbReference>
<dbReference type="GO" id="GO:0030150">
    <property type="term" value="P:protein import into mitochondrial matrix"/>
    <property type="evidence" value="ECO:0000318"/>
    <property type="project" value="GO_Central"/>
</dbReference>
<dbReference type="CDD" id="cd00446">
    <property type="entry name" value="GrpE"/>
    <property type="match status" value="1"/>
</dbReference>
<dbReference type="FunFam" id="2.30.22.10:FF:000003">
    <property type="entry name" value="GrpE protein homolog"/>
    <property type="match status" value="1"/>
</dbReference>
<dbReference type="FunFam" id="3.90.20.20:FF:000004">
    <property type="entry name" value="GrpE protein homolog"/>
    <property type="match status" value="1"/>
</dbReference>
<dbReference type="Gene3D" id="3.90.20.20">
    <property type="match status" value="1"/>
</dbReference>
<dbReference type="Gene3D" id="2.30.22.10">
    <property type="entry name" value="Head domain of nucleotide exchange factor GrpE"/>
    <property type="match status" value="1"/>
</dbReference>
<dbReference type="HAMAP" id="MF_01151">
    <property type="entry name" value="GrpE"/>
    <property type="match status" value="1"/>
</dbReference>
<dbReference type="InterPro" id="IPR000740">
    <property type="entry name" value="GrpE"/>
</dbReference>
<dbReference type="InterPro" id="IPR013805">
    <property type="entry name" value="GrpE_coiled_coil"/>
</dbReference>
<dbReference type="InterPro" id="IPR009012">
    <property type="entry name" value="GrpE_head"/>
</dbReference>
<dbReference type="PANTHER" id="PTHR21237">
    <property type="entry name" value="GRPE PROTEIN"/>
    <property type="match status" value="1"/>
</dbReference>
<dbReference type="PANTHER" id="PTHR21237:SF10">
    <property type="entry name" value="GRPE PROTEIN HOMOLOG 2, MITOCHONDRIAL"/>
    <property type="match status" value="1"/>
</dbReference>
<dbReference type="Pfam" id="PF01025">
    <property type="entry name" value="GrpE"/>
    <property type="match status" value="1"/>
</dbReference>
<dbReference type="PRINTS" id="PR00773">
    <property type="entry name" value="GRPEPROTEIN"/>
</dbReference>
<dbReference type="SUPFAM" id="SSF58014">
    <property type="entry name" value="Coiled-coil domain of nucleotide exchange factor GrpE"/>
    <property type="match status" value="1"/>
</dbReference>
<dbReference type="SUPFAM" id="SSF51064">
    <property type="entry name" value="Head domain of nucleotide exchange factor GrpE"/>
    <property type="match status" value="1"/>
</dbReference>
<dbReference type="PROSITE" id="PS01071">
    <property type="entry name" value="GRPE"/>
    <property type="match status" value="1"/>
</dbReference>
<keyword id="KW-0007">Acetylation</keyword>
<keyword id="KW-0143">Chaperone</keyword>
<keyword id="KW-0496">Mitochondrion</keyword>
<keyword id="KW-1185">Reference proteome</keyword>
<keyword id="KW-0809">Transit peptide</keyword>
<accession>Q0P5N5</accession>
<feature type="transit peptide" description="Mitochondrion" evidence="1">
    <location>
        <begin position="1"/>
        <end position="31"/>
    </location>
</feature>
<feature type="chain" id="PRO_0000273550" description="GrpE protein homolog 2, mitochondrial">
    <location>
        <begin position="32"/>
        <end position="224"/>
    </location>
</feature>
<feature type="modified residue" description="N6-acetyllysine" evidence="2">
    <location>
        <position position="141"/>
    </location>
</feature>
<organism>
    <name type="scientific">Bos taurus</name>
    <name type="common">Bovine</name>
    <dbReference type="NCBI Taxonomy" id="9913"/>
    <lineage>
        <taxon>Eukaryota</taxon>
        <taxon>Metazoa</taxon>
        <taxon>Chordata</taxon>
        <taxon>Craniata</taxon>
        <taxon>Vertebrata</taxon>
        <taxon>Euteleostomi</taxon>
        <taxon>Mammalia</taxon>
        <taxon>Eutheria</taxon>
        <taxon>Laurasiatheria</taxon>
        <taxon>Artiodactyla</taxon>
        <taxon>Ruminantia</taxon>
        <taxon>Pecora</taxon>
        <taxon>Bovidae</taxon>
        <taxon>Bovinae</taxon>
        <taxon>Bos</taxon>
    </lineage>
</organism>
<reference key="1">
    <citation type="submission" date="2006-08" db="EMBL/GenBank/DDBJ databases">
        <authorList>
            <consortium name="NIH - Mammalian Gene Collection (MGC) project"/>
        </authorList>
    </citation>
    <scope>NUCLEOTIDE SEQUENCE [LARGE SCALE MRNA]</scope>
    <source>
        <strain>Hereford</strain>
        <tissue>Uterus</tissue>
    </source>
</reference>
<name>GRPE2_BOVIN</name>